<proteinExistence type="inferred from homology"/>
<feature type="chain" id="PRO_1000189739" description="D-alanine--D-alanine ligase">
    <location>
        <begin position="1"/>
        <end position="356"/>
    </location>
</feature>
<feature type="domain" description="ATP-grasp" evidence="2">
    <location>
        <begin position="134"/>
        <end position="339"/>
    </location>
</feature>
<feature type="binding site" evidence="2">
    <location>
        <begin position="167"/>
        <end position="222"/>
    </location>
    <ligand>
        <name>ATP</name>
        <dbReference type="ChEBI" id="CHEBI:30616"/>
    </ligand>
</feature>
<feature type="binding site" evidence="2">
    <location>
        <position position="293"/>
    </location>
    <ligand>
        <name>Mg(2+)</name>
        <dbReference type="ChEBI" id="CHEBI:18420"/>
        <label>1</label>
    </ligand>
</feature>
<feature type="binding site" evidence="2">
    <location>
        <position position="306"/>
    </location>
    <ligand>
        <name>Mg(2+)</name>
        <dbReference type="ChEBI" id="CHEBI:18420"/>
        <label>1</label>
    </ligand>
</feature>
<feature type="binding site" evidence="2">
    <location>
        <position position="306"/>
    </location>
    <ligand>
        <name>Mg(2+)</name>
        <dbReference type="ChEBI" id="CHEBI:18420"/>
        <label>2</label>
    </ligand>
</feature>
<feature type="binding site" evidence="2">
    <location>
        <position position="308"/>
    </location>
    <ligand>
        <name>Mg(2+)</name>
        <dbReference type="ChEBI" id="CHEBI:18420"/>
        <label>2</label>
    </ligand>
</feature>
<reference key="1">
    <citation type="journal article" date="2009" name="J. Bacteriol.">
        <title>Complete genome sequence of Macrococcus caseolyticus strain JCSCS5402, reflecting the ancestral genome of the human-pathogenic staphylococci.</title>
        <authorList>
            <person name="Baba T."/>
            <person name="Kuwahara-Arai K."/>
            <person name="Uchiyama I."/>
            <person name="Takeuchi F."/>
            <person name="Ito T."/>
            <person name="Hiramatsu K."/>
        </authorList>
    </citation>
    <scope>NUCLEOTIDE SEQUENCE [LARGE SCALE GENOMIC DNA]</scope>
    <source>
        <strain>JCSC5402</strain>
    </source>
</reference>
<organism>
    <name type="scientific">Macrococcus caseolyticus (strain JCSC5402)</name>
    <name type="common">Macrococcoides caseolyticum</name>
    <dbReference type="NCBI Taxonomy" id="458233"/>
    <lineage>
        <taxon>Bacteria</taxon>
        <taxon>Bacillati</taxon>
        <taxon>Bacillota</taxon>
        <taxon>Bacilli</taxon>
        <taxon>Bacillales</taxon>
        <taxon>Staphylococcaceae</taxon>
        <taxon>Macrococcoides</taxon>
    </lineage>
</organism>
<evidence type="ECO:0000250" key="1"/>
<evidence type="ECO:0000255" key="2">
    <source>
        <dbReference type="HAMAP-Rule" id="MF_00047"/>
    </source>
</evidence>
<protein>
    <recommendedName>
        <fullName evidence="2">D-alanine--D-alanine ligase</fullName>
        <ecNumber evidence="2">6.3.2.4</ecNumber>
    </recommendedName>
    <alternativeName>
        <fullName evidence="2">D-Ala-D-Ala ligase</fullName>
    </alternativeName>
    <alternativeName>
        <fullName evidence="2">D-alanylalanine synthetase</fullName>
    </alternativeName>
</protein>
<gene>
    <name evidence="2" type="primary">ddl</name>
    <name type="ordered locus">MCCL_1741</name>
</gene>
<sequence length="356" mass="39740">MAKEHICIIYGGKSAEHDVSLLTAQSVINAMDKDKYAIDTIYITNDGEWLKGPEISETIEDSERLRLSHIERLSISEMLNVSSAGKAYDAVFPLLHGPNGEDGTIQGLFEVLDIPYVGNGVLAASTSMDKLVMKQLFATRGLPQLPYVSFLKSEYEAHKDNIISLVEGKLTYPVFVKPANLGSSVGISKCTDSETLIHGIEEALQFDRKLVIEQGVNAREVEVAVLGNDTPETTLPGEVVKDVDFYDYKSKYKDGKVRLQIPADISEEIQSALRDMAVEAFKATDCSGLVRADFFLTEDDKIYINETNAMPGFTKFSMYPLLWENMGKSYSELITDLINLAKERYKDKKNIKYKMD</sequence>
<name>DDL_MACCJ</name>
<dbReference type="EC" id="6.3.2.4" evidence="2"/>
<dbReference type="EMBL" id="AP009484">
    <property type="protein sequence ID" value="BAH18448.1"/>
    <property type="molecule type" value="Genomic_DNA"/>
</dbReference>
<dbReference type="RefSeq" id="WP_015912240.1">
    <property type="nucleotide sequence ID" value="NC_011999.1"/>
</dbReference>
<dbReference type="SMR" id="B9E8D0"/>
<dbReference type="STRING" id="458233.MCCL_1741"/>
<dbReference type="KEGG" id="mcl:MCCL_1741"/>
<dbReference type="eggNOG" id="COG1181">
    <property type="taxonomic scope" value="Bacteria"/>
</dbReference>
<dbReference type="HOGENOM" id="CLU_039268_0_0_9"/>
<dbReference type="OrthoDB" id="9813261at2"/>
<dbReference type="UniPathway" id="UPA00219"/>
<dbReference type="Proteomes" id="UP000001383">
    <property type="component" value="Chromosome"/>
</dbReference>
<dbReference type="GO" id="GO:0005829">
    <property type="term" value="C:cytosol"/>
    <property type="evidence" value="ECO:0007669"/>
    <property type="project" value="TreeGrafter"/>
</dbReference>
<dbReference type="GO" id="GO:0005524">
    <property type="term" value="F:ATP binding"/>
    <property type="evidence" value="ECO:0007669"/>
    <property type="project" value="UniProtKB-KW"/>
</dbReference>
<dbReference type="GO" id="GO:0008716">
    <property type="term" value="F:D-alanine-D-alanine ligase activity"/>
    <property type="evidence" value="ECO:0007669"/>
    <property type="project" value="UniProtKB-UniRule"/>
</dbReference>
<dbReference type="GO" id="GO:0046872">
    <property type="term" value="F:metal ion binding"/>
    <property type="evidence" value="ECO:0007669"/>
    <property type="project" value="UniProtKB-KW"/>
</dbReference>
<dbReference type="GO" id="GO:0071555">
    <property type="term" value="P:cell wall organization"/>
    <property type="evidence" value="ECO:0007669"/>
    <property type="project" value="UniProtKB-KW"/>
</dbReference>
<dbReference type="GO" id="GO:0009252">
    <property type="term" value="P:peptidoglycan biosynthetic process"/>
    <property type="evidence" value="ECO:0007669"/>
    <property type="project" value="UniProtKB-UniRule"/>
</dbReference>
<dbReference type="GO" id="GO:0008360">
    <property type="term" value="P:regulation of cell shape"/>
    <property type="evidence" value="ECO:0007669"/>
    <property type="project" value="UniProtKB-KW"/>
</dbReference>
<dbReference type="FunFam" id="3.30.1490.20:FF:000007">
    <property type="entry name" value="D-alanine--D-alanine ligase"/>
    <property type="match status" value="1"/>
</dbReference>
<dbReference type="FunFam" id="3.30.470.20:FF:000008">
    <property type="entry name" value="D-alanine--D-alanine ligase"/>
    <property type="match status" value="1"/>
</dbReference>
<dbReference type="Gene3D" id="3.40.50.20">
    <property type="match status" value="1"/>
</dbReference>
<dbReference type="Gene3D" id="3.30.1490.20">
    <property type="entry name" value="ATP-grasp fold, A domain"/>
    <property type="match status" value="1"/>
</dbReference>
<dbReference type="Gene3D" id="3.30.470.20">
    <property type="entry name" value="ATP-grasp fold, B domain"/>
    <property type="match status" value="1"/>
</dbReference>
<dbReference type="HAMAP" id="MF_00047">
    <property type="entry name" value="Dala_Dala_lig"/>
    <property type="match status" value="1"/>
</dbReference>
<dbReference type="InterPro" id="IPR011761">
    <property type="entry name" value="ATP-grasp"/>
</dbReference>
<dbReference type="InterPro" id="IPR013815">
    <property type="entry name" value="ATP_grasp_subdomain_1"/>
</dbReference>
<dbReference type="InterPro" id="IPR000291">
    <property type="entry name" value="D-Ala_lig_Van_CS"/>
</dbReference>
<dbReference type="InterPro" id="IPR005905">
    <property type="entry name" value="D_ala_D_ala"/>
</dbReference>
<dbReference type="InterPro" id="IPR011095">
    <property type="entry name" value="Dala_Dala_lig_C"/>
</dbReference>
<dbReference type="InterPro" id="IPR011127">
    <property type="entry name" value="Dala_Dala_lig_N"/>
</dbReference>
<dbReference type="InterPro" id="IPR016185">
    <property type="entry name" value="PreATP-grasp_dom_sf"/>
</dbReference>
<dbReference type="NCBIfam" id="TIGR01205">
    <property type="entry name" value="D_ala_D_alaTIGR"/>
    <property type="match status" value="1"/>
</dbReference>
<dbReference type="NCBIfam" id="NF002526">
    <property type="entry name" value="PRK01966.1-2"/>
    <property type="match status" value="1"/>
</dbReference>
<dbReference type="NCBIfam" id="NF002528">
    <property type="entry name" value="PRK01966.1-4"/>
    <property type="match status" value="1"/>
</dbReference>
<dbReference type="PANTHER" id="PTHR23132">
    <property type="entry name" value="D-ALANINE--D-ALANINE LIGASE"/>
    <property type="match status" value="1"/>
</dbReference>
<dbReference type="PANTHER" id="PTHR23132:SF25">
    <property type="entry name" value="D-ALANINE--D-ALANINE LIGASE A"/>
    <property type="match status" value="1"/>
</dbReference>
<dbReference type="Pfam" id="PF07478">
    <property type="entry name" value="Dala_Dala_lig_C"/>
    <property type="match status" value="1"/>
</dbReference>
<dbReference type="Pfam" id="PF01820">
    <property type="entry name" value="Dala_Dala_lig_N"/>
    <property type="match status" value="1"/>
</dbReference>
<dbReference type="PIRSF" id="PIRSF039102">
    <property type="entry name" value="Ddl/VanB"/>
    <property type="match status" value="1"/>
</dbReference>
<dbReference type="SUPFAM" id="SSF56059">
    <property type="entry name" value="Glutathione synthetase ATP-binding domain-like"/>
    <property type="match status" value="1"/>
</dbReference>
<dbReference type="SUPFAM" id="SSF52440">
    <property type="entry name" value="PreATP-grasp domain"/>
    <property type="match status" value="1"/>
</dbReference>
<dbReference type="PROSITE" id="PS50975">
    <property type="entry name" value="ATP_GRASP"/>
    <property type="match status" value="1"/>
</dbReference>
<dbReference type="PROSITE" id="PS00843">
    <property type="entry name" value="DALA_DALA_LIGASE_1"/>
    <property type="match status" value="1"/>
</dbReference>
<dbReference type="PROSITE" id="PS00844">
    <property type="entry name" value="DALA_DALA_LIGASE_2"/>
    <property type="match status" value="1"/>
</dbReference>
<accession>B9E8D0</accession>
<keyword id="KW-0067">ATP-binding</keyword>
<keyword id="KW-0133">Cell shape</keyword>
<keyword id="KW-0961">Cell wall biogenesis/degradation</keyword>
<keyword id="KW-0963">Cytoplasm</keyword>
<keyword id="KW-0436">Ligase</keyword>
<keyword id="KW-0460">Magnesium</keyword>
<keyword id="KW-0464">Manganese</keyword>
<keyword id="KW-0479">Metal-binding</keyword>
<keyword id="KW-0547">Nucleotide-binding</keyword>
<keyword id="KW-0573">Peptidoglycan synthesis</keyword>
<keyword id="KW-1185">Reference proteome</keyword>
<comment type="function">
    <text evidence="2">Cell wall formation.</text>
</comment>
<comment type="catalytic activity">
    <reaction evidence="2">
        <text>2 D-alanine + ATP = D-alanyl-D-alanine + ADP + phosphate + H(+)</text>
        <dbReference type="Rhea" id="RHEA:11224"/>
        <dbReference type="ChEBI" id="CHEBI:15378"/>
        <dbReference type="ChEBI" id="CHEBI:30616"/>
        <dbReference type="ChEBI" id="CHEBI:43474"/>
        <dbReference type="ChEBI" id="CHEBI:57416"/>
        <dbReference type="ChEBI" id="CHEBI:57822"/>
        <dbReference type="ChEBI" id="CHEBI:456216"/>
        <dbReference type="EC" id="6.3.2.4"/>
    </reaction>
</comment>
<comment type="cofactor">
    <cofactor evidence="1">
        <name>Mg(2+)</name>
        <dbReference type="ChEBI" id="CHEBI:18420"/>
    </cofactor>
    <cofactor evidence="1">
        <name>Mn(2+)</name>
        <dbReference type="ChEBI" id="CHEBI:29035"/>
    </cofactor>
    <text evidence="1">Binds 2 magnesium or manganese ions per subunit.</text>
</comment>
<comment type="pathway">
    <text evidence="2">Cell wall biogenesis; peptidoglycan biosynthesis.</text>
</comment>
<comment type="subcellular location">
    <subcellularLocation>
        <location evidence="2">Cytoplasm</location>
    </subcellularLocation>
</comment>
<comment type="similarity">
    <text evidence="2">Belongs to the D-alanine--D-alanine ligase family.</text>
</comment>